<evidence type="ECO:0000250" key="1">
    <source>
        <dbReference type="UniProtKB" id="Q47N25"/>
    </source>
</evidence>
<evidence type="ECO:0000250" key="2">
    <source>
        <dbReference type="UniProtKB" id="Q9L268"/>
    </source>
</evidence>
<evidence type="ECO:0000256" key="3">
    <source>
        <dbReference type="SAM" id="MobiDB-lite"/>
    </source>
</evidence>
<evidence type="ECO:0000269" key="4">
    <source>
    </source>
</evidence>
<evidence type="ECO:0000303" key="5">
    <source>
    </source>
</evidence>
<evidence type="ECO:0000305" key="6"/>
<evidence type="ECO:0000312" key="7">
    <source>
        <dbReference type="EMBL" id="ABS04533.1"/>
    </source>
</evidence>
<evidence type="ECO:0000312" key="8">
    <source>
        <dbReference type="Proteomes" id="UP000001116"/>
    </source>
</evidence>
<organism evidence="7">
    <name type="scientific">Kineococcus radiotolerans (strain ATCC BAA-149 / DSM 14245 / SRS30216)</name>
    <dbReference type="NCBI Taxonomy" id="266940"/>
    <lineage>
        <taxon>Bacteria</taxon>
        <taxon>Bacillati</taxon>
        <taxon>Actinomycetota</taxon>
        <taxon>Actinomycetes</taxon>
        <taxon>Kineosporiales</taxon>
        <taxon>Kineosporiaceae</taxon>
        <taxon>Kineococcus</taxon>
    </lineage>
</organism>
<comment type="function">
    <text evidence="1 2 4">Involved in sporulation-specific cell division (PubMed:19567872). Required for early stages of sporulation. Important in the process of growth cessation prior to sporulation-specific cell division. Recruits cell division protein FtsZ to the future septum sites and tethers the contractile ring structure (Z ring) to the cytoplasmic membrane during sporulation. Stimulates polymerization and filament length of FtsZ in vitro (By similarity).</text>
</comment>
<comment type="subunit">
    <text evidence="1 2">Interacts with SsgA. Interacts with FtsZ (via N-terminus).</text>
</comment>
<comment type="subcellular location">
    <subcellularLocation>
        <location evidence="2">Cell septum</location>
    </subcellularLocation>
    <text evidence="2">Localizes to the divisome in sporogenic aerial hyphae in a ladder-like manner. Temporospatial localization is controlled by SsgA and it colocalizes with SsgA in presporulation foci. Localizes to the septum sites prior to FtsZ and after that colocalizes with FtsZ at the divisome throughout cell division.</text>
</comment>
<comment type="similarity">
    <text evidence="6">Belongs to the SsgA family.</text>
</comment>
<proteinExistence type="inferred from homology"/>
<feature type="chain" id="PRO_0000435311" description="Sporulation-specific cell division protein SsgB">
    <location>
        <begin position="1"/>
        <end position="165"/>
    </location>
</feature>
<feature type="region of interest" description="Disordered" evidence="3">
    <location>
        <begin position="1"/>
        <end position="21"/>
    </location>
</feature>
<keyword id="KW-0131">Cell cycle</keyword>
<keyword id="KW-0132">Cell division</keyword>
<keyword id="KW-1185">Reference proteome</keyword>
<keyword id="KW-0717">Septation</keyword>
<keyword id="KW-0749">Sporulation</keyword>
<name>SSGB_KINRD</name>
<dbReference type="EMBL" id="CP000750">
    <property type="protein sequence ID" value="ABS04533.1"/>
    <property type="molecule type" value="Genomic_DNA"/>
</dbReference>
<dbReference type="SMR" id="A6WCJ4"/>
<dbReference type="STRING" id="266940.Krad_3069"/>
<dbReference type="KEGG" id="kra:Krad_3069"/>
<dbReference type="eggNOG" id="ENOG5032RFA">
    <property type="taxonomic scope" value="Bacteria"/>
</dbReference>
<dbReference type="HOGENOM" id="CLU_126599_0_1_11"/>
<dbReference type="Proteomes" id="UP000001116">
    <property type="component" value="Chromosome"/>
</dbReference>
<dbReference type="GO" id="GO:0030428">
    <property type="term" value="C:cell septum"/>
    <property type="evidence" value="ECO:0007669"/>
    <property type="project" value="UniProtKB-SubCell"/>
</dbReference>
<dbReference type="GO" id="GO:0000917">
    <property type="term" value="P:division septum assembly"/>
    <property type="evidence" value="ECO:0007669"/>
    <property type="project" value="UniProtKB-KW"/>
</dbReference>
<dbReference type="GO" id="GO:0030435">
    <property type="term" value="P:sporulation resulting in formation of a cellular spore"/>
    <property type="evidence" value="ECO:0007669"/>
    <property type="project" value="UniProtKB-KW"/>
</dbReference>
<dbReference type="Gene3D" id="2.30.31.20">
    <property type="entry name" value="Sporulation-specific cell division protein SsgB"/>
    <property type="match status" value="1"/>
</dbReference>
<dbReference type="InterPro" id="IPR006776">
    <property type="entry name" value="SsgB"/>
</dbReference>
<dbReference type="InterPro" id="IPR038658">
    <property type="entry name" value="SsgB_sf"/>
</dbReference>
<dbReference type="Pfam" id="PF04686">
    <property type="entry name" value="SsgA"/>
    <property type="match status" value="1"/>
</dbReference>
<accession>A6WCJ4</accession>
<gene>
    <name evidence="5" type="primary">ssgB</name>
    <name evidence="7" type="ordered locus">Krad_3069</name>
</gene>
<protein>
    <recommendedName>
        <fullName evidence="5">Sporulation-specific cell division protein SsgB</fullName>
    </recommendedName>
    <alternativeName>
        <fullName evidence="5">Sporulation of Streptomyces griseus-like protein B</fullName>
    </alternativeName>
    <alternativeName>
        <fullName evidence="5">SsgA-like protein B</fullName>
        <shortName evidence="5">SALP B</shortName>
    </alternativeName>
</protein>
<reference evidence="8" key="1">
    <citation type="journal article" date="2008" name="PLoS ONE">
        <title>Survival in nuclear waste, extreme resistance, and potential applications gleaned from the genome sequence of Kineococcus radiotolerans SRS30216.</title>
        <authorList>
            <person name="Bagwell C.E."/>
            <person name="Bhat S."/>
            <person name="Hawkins G.M."/>
            <person name="Smith B.W."/>
            <person name="Biswas T."/>
            <person name="Hoover T.R."/>
            <person name="Saunders E."/>
            <person name="Han C.S."/>
            <person name="Tsodikov O.V."/>
            <person name="Shimkets L.J."/>
        </authorList>
    </citation>
    <scope>NUCLEOTIDE SEQUENCE [LARGE SCALE GENOMIC DNA]</scope>
    <source>
        <strain evidence="8">ATCC BAA-149 / DSM 14245 / SRS30216</strain>
    </source>
</reference>
<reference key="2">
    <citation type="journal article" date="2009" name="J. Biol. Chem.">
        <title>Structural and functional characterizations of SsgB, a conserved activator of developmental cell division in morphologically complex actinomycetes.</title>
        <authorList>
            <person name="Xu Q."/>
            <person name="Traag B.A."/>
            <person name="Willemse J."/>
            <person name="McMullan D."/>
            <person name="Miller M.D."/>
            <person name="Elsliger M.A."/>
            <person name="Abdubek P."/>
            <person name="Astakhova T."/>
            <person name="Axelrod H.L."/>
            <person name="Bakolitsa C."/>
            <person name="Carlton D."/>
            <person name="Chen C."/>
            <person name="Chiu H.J."/>
            <person name="Chruszcz M."/>
            <person name="Clayton T."/>
            <person name="Das D."/>
            <person name="Deller M.C."/>
            <person name="Duan L."/>
            <person name="Ellrott K."/>
            <person name="Ernst D."/>
            <person name="Farr C.L."/>
            <person name="Feuerhelm J."/>
            <person name="Grant J.C."/>
            <person name="Grzechnik A."/>
            <person name="Grzechnik S.K."/>
            <person name="Han G.W."/>
            <person name="Jaroszewski L."/>
            <person name="Jin K.K."/>
            <person name="Klock H.E."/>
            <person name="Knuth M.W."/>
            <person name="Kozbial P."/>
            <person name="Krishna S.S."/>
            <person name="Kumar A."/>
            <person name="Marciano D."/>
            <person name="Minor W."/>
            <person name="Mommaas A.M."/>
            <person name="Morse A.T."/>
            <person name="Nigoghossian E."/>
            <person name="Nopakun A."/>
            <person name="Okach L."/>
            <person name="Oommachen S."/>
            <person name="Paulsen J."/>
            <person name="Puckett C."/>
            <person name="Reyes R."/>
            <person name="Rife C.L."/>
            <person name="Sefcovic N."/>
            <person name="Tien H.J."/>
            <person name="Trame C.B."/>
            <person name="van den Bedem H."/>
            <person name="Wang S."/>
            <person name="Weekes D."/>
            <person name="Hodgson K.O."/>
            <person name="Wooley J."/>
            <person name="Deacon A.M."/>
            <person name="Godzik A."/>
            <person name="Lesley S.A."/>
            <person name="Wilson I.A."/>
            <person name="van Wezel G.P."/>
        </authorList>
    </citation>
    <scope>NUCLEOTIDE SEQUENCE [GENOMIC DNA] OF 3-165</scope>
    <scope>FUNCTION</scope>
    <source>
        <strain evidence="5">ATCC BAA-149 / DSM 14245 / SRS30216</strain>
    </source>
</reference>
<sequence>MLVGNSWTRSLEPVSGHEHTEVDVPALPHRKTEVDVDVSLRLRTTSGPGLPVPASLHYGADDPYAIHAVFRGGDTDVEWVFARDLLREGLSAPAGAGDVQVQPCSDSPDGRPRVLLRLSSPDGNAELEADESDVRRFLRRADALVPPGRETRHLDLDELIARLVS</sequence>